<feature type="chain" id="PRO_0000198272" description="Calmodulin">
    <location>
        <begin position="1" status="less than"/>
        <end position="80"/>
    </location>
</feature>
<feature type="domain" description="EF-hand 3" evidence="1">
    <location>
        <begin position="12"/>
        <end position="47"/>
    </location>
</feature>
<feature type="domain" description="EF-hand 4" evidence="1">
    <location>
        <begin position="48"/>
        <end position="80"/>
    </location>
</feature>
<feature type="binding site" evidence="1">
    <location>
        <position position="25"/>
    </location>
    <ligand>
        <name>Ca(2+)</name>
        <dbReference type="ChEBI" id="CHEBI:29108"/>
        <label>3</label>
    </ligand>
</feature>
<feature type="binding site" evidence="1">
    <location>
        <position position="27"/>
    </location>
    <ligand>
        <name>Ca(2+)</name>
        <dbReference type="ChEBI" id="CHEBI:29108"/>
        <label>3</label>
    </ligand>
</feature>
<feature type="binding site" evidence="1">
    <location>
        <position position="29"/>
    </location>
    <ligand>
        <name>Ca(2+)</name>
        <dbReference type="ChEBI" id="CHEBI:29108"/>
        <label>3</label>
    </ligand>
</feature>
<feature type="binding site" evidence="1">
    <location>
        <position position="36"/>
    </location>
    <ligand>
        <name>Ca(2+)</name>
        <dbReference type="ChEBI" id="CHEBI:29108"/>
        <label>3</label>
    </ligand>
</feature>
<feature type="binding site" evidence="1">
    <location>
        <position position="61"/>
    </location>
    <ligand>
        <name>Ca(2+)</name>
        <dbReference type="ChEBI" id="CHEBI:29108"/>
        <label>4</label>
    </ligand>
</feature>
<feature type="binding site" evidence="1">
    <location>
        <position position="63"/>
    </location>
    <ligand>
        <name>Ca(2+)</name>
        <dbReference type="ChEBI" id="CHEBI:29108"/>
        <label>4</label>
    </ligand>
</feature>
<feature type="binding site" evidence="1">
    <location>
        <position position="65"/>
    </location>
    <ligand>
        <name>Ca(2+)</name>
        <dbReference type="ChEBI" id="CHEBI:29108"/>
        <label>4</label>
    </ligand>
</feature>
<feature type="binding site" evidence="1">
    <location>
        <position position="67"/>
    </location>
    <ligand>
        <name>Ca(2+)</name>
        <dbReference type="ChEBI" id="CHEBI:29108"/>
        <label>4</label>
    </ligand>
</feature>
<feature type="binding site" evidence="1">
    <location>
        <position position="72"/>
    </location>
    <ligand>
        <name>Ca(2+)</name>
        <dbReference type="ChEBI" id="CHEBI:29108"/>
        <label>4</label>
    </ligand>
</feature>
<feature type="non-terminal residue">
    <location>
        <position position="1"/>
    </location>
</feature>
<sequence length="80" mass="9196">LTMMARKMKETDSEEEIREAFRVFDKDGNGFISAAELRHVMTNLGEKLTDEEVDEMIREADIDGDGQVNYEEFVAMMTSK</sequence>
<evidence type="ECO:0000255" key="1">
    <source>
        <dbReference type="PROSITE-ProRule" id="PRU00448"/>
    </source>
</evidence>
<evidence type="ECO:0000305" key="2"/>
<protein>
    <recommendedName>
        <fullName>Calmodulin</fullName>
        <shortName>CaM</shortName>
    </recommendedName>
</protein>
<proteinExistence type="evidence at transcript level"/>
<organism>
    <name type="scientific">Strongylocentrotus purpuratus</name>
    <name type="common">Purple sea urchin</name>
    <dbReference type="NCBI Taxonomy" id="7668"/>
    <lineage>
        <taxon>Eukaryota</taxon>
        <taxon>Metazoa</taxon>
        <taxon>Echinodermata</taxon>
        <taxon>Eleutherozoa</taxon>
        <taxon>Echinozoa</taxon>
        <taxon>Echinoidea</taxon>
        <taxon>Euechinoidea</taxon>
        <taxon>Echinacea</taxon>
        <taxon>Camarodonta</taxon>
        <taxon>Echinidea</taxon>
        <taxon>Strongylocentrotidae</taxon>
        <taxon>Strongylocentrotus</taxon>
    </lineage>
</organism>
<comment type="function">
    <text>Calmodulin mediates the control of a large number of enzymes, ion channels and other proteins by Ca(2+). Among the enzymes to be stimulated by the calmodulin-Ca(2+) complex are a number of protein kinases and phosphatases.</text>
</comment>
<comment type="similarity">
    <text evidence="2">Belongs to the calmodulin family.</text>
</comment>
<accession>P05934</accession>
<reference key="1">
    <citation type="journal article" date="1986" name="Dev. Biol.">
        <title>Calmodulin gene expression during sea urchin development: persistence of a prevalent maternal protein.</title>
        <authorList>
            <person name="Floyd E.E."/>
            <person name="Gong Z."/>
            <person name="Brandhorst B.P."/>
            <person name="Klein W.H."/>
        </authorList>
    </citation>
    <scope>NUCLEOTIDE SEQUENCE [MRNA]</scope>
</reference>
<name>CALM_STRPU</name>
<keyword id="KW-0106">Calcium</keyword>
<keyword id="KW-0479">Metal-binding</keyword>
<keyword id="KW-1185">Reference proteome</keyword>
<keyword id="KW-0677">Repeat</keyword>
<dbReference type="PIR" id="A45940">
    <property type="entry name" value="A45940"/>
</dbReference>
<dbReference type="SMR" id="P05934"/>
<dbReference type="STRING" id="7668.P05934"/>
<dbReference type="eggNOG" id="KOG0027">
    <property type="taxonomic scope" value="Eukaryota"/>
</dbReference>
<dbReference type="HOGENOM" id="CLU_061288_2_0_1"/>
<dbReference type="InParanoid" id="P05934"/>
<dbReference type="Proteomes" id="UP000007110">
    <property type="component" value="Unassembled WGS sequence"/>
</dbReference>
<dbReference type="GO" id="GO:0005737">
    <property type="term" value="C:cytoplasm"/>
    <property type="evidence" value="ECO:0000318"/>
    <property type="project" value="GO_Central"/>
</dbReference>
<dbReference type="GO" id="GO:0005509">
    <property type="term" value="F:calcium ion binding"/>
    <property type="evidence" value="ECO:0000318"/>
    <property type="project" value="GO_Central"/>
</dbReference>
<dbReference type="GO" id="GO:0030234">
    <property type="term" value="F:enzyme regulator activity"/>
    <property type="evidence" value="ECO:0000318"/>
    <property type="project" value="GO_Central"/>
</dbReference>
<dbReference type="GO" id="GO:0000226">
    <property type="term" value="P:microtubule cytoskeleton organization"/>
    <property type="evidence" value="ECO:0000318"/>
    <property type="project" value="GO_Central"/>
</dbReference>
<dbReference type="CDD" id="cd00051">
    <property type="entry name" value="EFh"/>
    <property type="match status" value="1"/>
</dbReference>
<dbReference type="FunFam" id="1.10.238.10:FF:000003">
    <property type="entry name" value="Calmodulin A"/>
    <property type="match status" value="1"/>
</dbReference>
<dbReference type="Gene3D" id="1.10.238.10">
    <property type="entry name" value="EF-hand"/>
    <property type="match status" value="2"/>
</dbReference>
<dbReference type="InterPro" id="IPR050230">
    <property type="entry name" value="CALM/Myosin/TropC-like"/>
</dbReference>
<dbReference type="InterPro" id="IPR011992">
    <property type="entry name" value="EF-hand-dom_pair"/>
</dbReference>
<dbReference type="InterPro" id="IPR018247">
    <property type="entry name" value="EF_Hand_1_Ca_BS"/>
</dbReference>
<dbReference type="InterPro" id="IPR002048">
    <property type="entry name" value="EF_hand_dom"/>
</dbReference>
<dbReference type="PANTHER" id="PTHR23048:SF0">
    <property type="entry name" value="CALMODULIN LIKE 3"/>
    <property type="match status" value="1"/>
</dbReference>
<dbReference type="PANTHER" id="PTHR23048">
    <property type="entry name" value="MYOSIN LIGHT CHAIN 1, 3"/>
    <property type="match status" value="1"/>
</dbReference>
<dbReference type="Pfam" id="PF13499">
    <property type="entry name" value="EF-hand_7"/>
    <property type="match status" value="1"/>
</dbReference>
<dbReference type="SMART" id="SM00054">
    <property type="entry name" value="EFh"/>
    <property type="match status" value="2"/>
</dbReference>
<dbReference type="SUPFAM" id="SSF47473">
    <property type="entry name" value="EF-hand"/>
    <property type="match status" value="1"/>
</dbReference>
<dbReference type="PROSITE" id="PS00018">
    <property type="entry name" value="EF_HAND_1"/>
    <property type="match status" value="2"/>
</dbReference>
<dbReference type="PROSITE" id="PS50222">
    <property type="entry name" value="EF_HAND_2"/>
    <property type="match status" value="2"/>
</dbReference>